<comment type="function">
    <text evidence="1">F(1)F(0) ATP synthase produces ATP from ADP in the presence of a proton or sodium gradient. F-type ATPases consist of two structural domains, F(1) containing the extramembraneous catalytic core and F(0) containing the membrane proton channel, linked together by a central stalk and a peripheral stalk. During catalysis, ATP synthesis in the catalytic domain of F(1) is coupled via a rotary mechanism of the central stalk subunits to proton translocation.</text>
</comment>
<comment type="function">
    <text evidence="1">This protein is part of the stalk that links CF(0) to CF(1). It either transmits conformational changes from CF(0) to CF(1) or is implicated in proton conduction.</text>
</comment>
<comment type="subunit">
    <text evidence="1">F-type ATPases have 2 components, F(1) - the catalytic core - and F(0) - the membrane proton channel. F(1) has five subunits: alpha(3), beta(3), gamma(1), delta(1), epsilon(1). F(0) has three main subunits: a(1), b(2) and c(10-14). The alpha and beta chains form an alternating ring which encloses part of the gamma chain. F(1) is attached to F(0) by a central stalk formed by the gamma and epsilon chains, while a peripheral stalk is formed by the delta and b chains.</text>
</comment>
<comment type="subcellular location">
    <subcellularLocation>
        <location evidence="1">Cell inner membrane</location>
        <topology evidence="1">Peripheral membrane protein</topology>
    </subcellularLocation>
</comment>
<comment type="similarity">
    <text evidence="1">Belongs to the ATPase delta chain family.</text>
</comment>
<protein>
    <recommendedName>
        <fullName evidence="1">ATP synthase subunit delta</fullName>
    </recommendedName>
    <alternativeName>
        <fullName evidence="1">ATP synthase F(1) sector subunit delta</fullName>
    </alternativeName>
    <alternativeName>
        <fullName evidence="1">F-type ATPase subunit delta</fullName>
        <shortName evidence="1">F-ATPase subunit delta</shortName>
    </alternativeName>
</protein>
<feature type="chain" id="PRO_1000184840" description="ATP synthase subunit delta">
    <location>
        <begin position="1"/>
        <end position="175"/>
    </location>
</feature>
<proteinExistence type="inferred from homology"/>
<sequence>MIQALTLARPYARAAFAIACEKGKCMQWSQALTFSAQVANNPIVATLLSHPQLDHEQAAALLSPEGADPAYIRFLEVIAEAHRLDVLLQVAGLYEKLRAEAQHVIKAKITSAIELAPNELNNIVTALKKRFDCEIEVTTGVDHSLIGGAVIDTGNVVIDGSIKSKLTRLQASLTH</sequence>
<evidence type="ECO:0000255" key="1">
    <source>
        <dbReference type="HAMAP-Rule" id="MF_01416"/>
    </source>
</evidence>
<reference key="1">
    <citation type="journal article" date="2010" name="J. Bacteriol.">
        <title>Whole genome sequences of two Xylella fastidiosa strains (M12 and M23) causing almond leaf scorch disease in California.</title>
        <authorList>
            <person name="Chen J."/>
            <person name="Xie G."/>
            <person name="Han S."/>
            <person name="Chertkov O."/>
            <person name="Sims D."/>
            <person name="Civerolo E.L."/>
        </authorList>
    </citation>
    <scope>NUCLEOTIDE SEQUENCE [LARGE SCALE GENOMIC DNA]</scope>
    <source>
        <strain>M23</strain>
    </source>
</reference>
<name>ATPD_XYLF2</name>
<accession>B2I863</accession>
<keyword id="KW-0066">ATP synthesis</keyword>
<keyword id="KW-0997">Cell inner membrane</keyword>
<keyword id="KW-1003">Cell membrane</keyword>
<keyword id="KW-0139">CF(1)</keyword>
<keyword id="KW-0375">Hydrogen ion transport</keyword>
<keyword id="KW-0406">Ion transport</keyword>
<keyword id="KW-0472">Membrane</keyword>
<keyword id="KW-0813">Transport</keyword>
<gene>
    <name evidence="1" type="primary">atpH</name>
    <name type="ordered locus">XfasM23_0427</name>
</gene>
<organism>
    <name type="scientific">Xylella fastidiosa (strain M23)</name>
    <dbReference type="NCBI Taxonomy" id="405441"/>
    <lineage>
        <taxon>Bacteria</taxon>
        <taxon>Pseudomonadati</taxon>
        <taxon>Pseudomonadota</taxon>
        <taxon>Gammaproteobacteria</taxon>
        <taxon>Lysobacterales</taxon>
        <taxon>Lysobacteraceae</taxon>
        <taxon>Xylella</taxon>
    </lineage>
</organism>
<dbReference type="EMBL" id="CP001011">
    <property type="protein sequence ID" value="ACB91874.1"/>
    <property type="molecule type" value="Genomic_DNA"/>
</dbReference>
<dbReference type="RefSeq" id="WP_011097646.1">
    <property type="nucleotide sequence ID" value="NC_010577.1"/>
</dbReference>
<dbReference type="SMR" id="B2I863"/>
<dbReference type="KEGG" id="xfn:XfasM23_0427"/>
<dbReference type="HOGENOM" id="CLU_085114_3_0_6"/>
<dbReference type="Proteomes" id="UP000001698">
    <property type="component" value="Chromosome"/>
</dbReference>
<dbReference type="GO" id="GO:0005886">
    <property type="term" value="C:plasma membrane"/>
    <property type="evidence" value="ECO:0007669"/>
    <property type="project" value="UniProtKB-SubCell"/>
</dbReference>
<dbReference type="GO" id="GO:0045259">
    <property type="term" value="C:proton-transporting ATP synthase complex"/>
    <property type="evidence" value="ECO:0007669"/>
    <property type="project" value="UniProtKB-KW"/>
</dbReference>
<dbReference type="GO" id="GO:0046933">
    <property type="term" value="F:proton-transporting ATP synthase activity, rotational mechanism"/>
    <property type="evidence" value="ECO:0007669"/>
    <property type="project" value="UniProtKB-UniRule"/>
</dbReference>
<dbReference type="Gene3D" id="1.10.520.20">
    <property type="entry name" value="N-terminal domain of the delta subunit of the F1F0-ATP synthase"/>
    <property type="match status" value="1"/>
</dbReference>
<dbReference type="HAMAP" id="MF_01416">
    <property type="entry name" value="ATP_synth_delta_bact"/>
    <property type="match status" value="1"/>
</dbReference>
<dbReference type="InterPro" id="IPR026015">
    <property type="entry name" value="ATP_synth_OSCP/delta_N_sf"/>
</dbReference>
<dbReference type="InterPro" id="IPR000711">
    <property type="entry name" value="ATPase_OSCP/dsu"/>
</dbReference>
<dbReference type="NCBIfam" id="TIGR01145">
    <property type="entry name" value="ATP_synt_delta"/>
    <property type="match status" value="1"/>
</dbReference>
<dbReference type="NCBIfam" id="NF004402">
    <property type="entry name" value="PRK05758.2-2"/>
    <property type="match status" value="1"/>
</dbReference>
<dbReference type="PANTHER" id="PTHR11910">
    <property type="entry name" value="ATP SYNTHASE DELTA CHAIN"/>
    <property type="match status" value="1"/>
</dbReference>
<dbReference type="Pfam" id="PF00213">
    <property type="entry name" value="OSCP"/>
    <property type="match status" value="1"/>
</dbReference>
<dbReference type="PRINTS" id="PR00125">
    <property type="entry name" value="ATPASEDELTA"/>
</dbReference>
<dbReference type="SUPFAM" id="SSF47928">
    <property type="entry name" value="N-terminal domain of the delta subunit of the F1F0-ATP synthase"/>
    <property type="match status" value="1"/>
</dbReference>